<proteinExistence type="inferred from homology"/>
<protein>
    <recommendedName>
        <fullName evidence="1">Cytoplasmic tRNA 2-thiolation protein 1</fullName>
        <ecNumber evidence="1">2.7.7.-</ecNumber>
    </recommendedName>
    <alternativeName>
        <fullName evidence="1">Cytoplasmic tRNA adenylyltransferase 1</fullName>
    </alternativeName>
</protein>
<reference key="1">
    <citation type="journal article" date="2005" name="Science">
        <title>The genome of the basidiomycetous yeast and human pathogen Cryptococcus neoformans.</title>
        <authorList>
            <person name="Loftus B.J."/>
            <person name="Fung E."/>
            <person name="Roncaglia P."/>
            <person name="Rowley D."/>
            <person name="Amedeo P."/>
            <person name="Bruno D."/>
            <person name="Vamathevan J."/>
            <person name="Miranda M."/>
            <person name="Anderson I.J."/>
            <person name="Fraser J.A."/>
            <person name="Allen J.E."/>
            <person name="Bosdet I.E."/>
            <person name="Brent M.R."/>
            <person name="Chiu R."/>
            <person name="Doering T.L."/>
            <person name="Donlin M.J."/>
            <person name="D'Souza C.A."/>
            <person name="Fox D.S."/>
            <person name="Grinberg V."/>
            <person name="Fu J."/>
            <person name="Fukushima M."/>
            <person name="Haas B.J."/>
            <person name="Huang J.C."/>
            <person name="Janbon G."/>
            <person name="Jones S.J.M."/>
            <person name="Koo H.L."/>
            <person name="Krzywinski M.I."/>
            <person name="Kwon-Chung K.J."/>
            <person name="Lengeler K.B."/>
            <person name="Maiti R."/>
            <person name="Marra M.A."/>
            <person name="Marra R.E."/>
            <person name="Mathewson C.A."/>
            <person name="Mitchell T.G."/>
            <person name="Pertea M."/>
            <person name="Riggs F.R."/>
            <person name="Salzberg S.L."/>
            <person name="Schein J.E."/>
            <person name="Shvartsbeyn A."/>
            <person name="Shin H."/>
            <person name="Shumway M."/>
            <person name="Specht C.A."/>
            <person name="Suh B.B."/>
            <person name="Tenney A."/>
            <person name="Utterback T.R."/>
            <person name="Wickes B.L."/>
            <person name="Wortman J.R."/>
            <person name="Wye N.H."/>
            <person name="Kronstad J.W."/>
            <person name="Lodge J.K."/>
            <person name="Heitman J."/>
            <person name="Davis R.W."/>
            <person name="Fraser C.M."/>
            <person name="Hyman R.W."/>
        </authorList>
    </citation>
    <scope>NUCLEOTIDE SEQUENCE [LARGE SCALE GENOMIC DNA]</scope>
    <source>
        <strain>JEC21 / ATCC MYA-565</strain>
    </source>
</reference>
<feature type="chain" id="PRO_0000368260" description="Cytoplasmic tRNA 2-thiolation protein 1">
    <location>
        <begin position="1"/>
        <end position="369"/>
    </location>
</feature>
<dbReference type="EC" id="2.7.7.-" evidence="1"/>
<dbReference type="EMBL" id="AE017345">
    <property type="protein sequence ID" value="AAW43763.2"/>
    <property type="molecule type" value="Genomic_DNA"/>
</dbReference>
<dbReference type="RefSeq" id="XP_571070.1">
    <property type="nucleotide sequence ID" value="XM_571070.1"/>
</dbReference>
<dbReference type="SMR" id="P0CS70"/>
<dbReference type="FunCoup" id="P0CS70">
    <property type="interactions" value="179"/>
</dbReference>
<dbReference type="STRING" id="214684.P0CS70"/>
<dbReference type="PaxDb" id="214684-P0CS70"/>
<dbReference type="EnsemblFungi" id="AAW43763">
    <property type="protein sequence ID" value="AAW43763"/>
    <property type="gene ID" value="CNE04150"/>
</dbReference>
<dbReference type="eggNOG" id="KOG2840">
    <property type="taxonomic scope" value="Eukaryota"/>
</dbReference>
<dbReference type="HOGENOM" id="CLU_026481_1_2_1"/>
<dbReference type="InParanoid" id="P0CS70"/>
<dbReference type="UniPathway" id="UPA00988"/>
<dbReference type="Proteomes" id="UP000002149">
    <property type="component" value="Chromosome 5"/>
</dbReference>
<dbReference type="GO" id="GO:0005829">
    <property type="term" value="C:cytosol"/>
    <property type="evidence" value="ECO:0000250"/>
    <property type="project" value="UniProtKB"/>
</dbReference>
<dbReference type="GO" id="GO:0002144">
    <property type="term" value="C:cytosolic tRNA wobble base thiouridylase complex"/>
    <property type="evidence" value="ECO:0000318"/>
    <property type="project" value="GO_Central"/>
</dbReference>
<dbReference type="GO" id="GO:0005777">
    <property type="term" value="C:peroxisome"/>
    <property type="evidence" value="ECO:0007669"/>
    <property type="project" value="EnsemblFungi"/>
</dbReference>
<dbReference type="GO" id="GO:0016779">
    <property type="term" value="F:nucleotidyltransferase activity"/>
    <property type="evidence" value="ECO:0007669"/>
    <property type="project" value="UniProtKB-UniRule"/>
</dbReference>
<dbReference type="GO" id="GO:0000049">
    <property type="term" value="F:tRNA binding"/>
    <property type="evidence" value="ECO:0000250"/>
    <property type="project" value="UniProtKB"/>
</dbReference>
<dbReference type="GO" id="GO:0103016">
    <property type="term" value="F:tRNA-uridine 2-sulfurtransferase activity"/>
    <property type="evidence" value="ECO:0007669"/>
    <property type="project" value="EnsemblFungi"/>
</dbReference>
<dbReference type="GO" id="GO:0032447">
    <property type="term" value="P:protein urmylation"/>
    <property type="evidence" value="ECO:0007669"/>
    <property type="project" value="UniProtKB-UniRule"/>
</dbReference>
<dbReference type="GO" id="GO:0034227">
    <property type="term" value="P:tRNA thio-modification"/>
    <property type="evidence" value="ECO:0000250"/>
    <property type="project" value="UniProtKB"/>
</dbReference>
<dbReference type="GO" id="GO:0002143">
    <property type="term" value="P:tRNA wobble position uridine thiolation"/>
    <property type="evidence" value="ECO:0000318"/>
    <property type="project" value="GO_Central"/>
</dbReference>
<dbReference type="GO" id="GO:0002098">
    <property type="term" value="P:tRNA wobble uridine modification"/>
    <property type="evidence" value="ECO:0000250"/>
    <property type="project" value="UniProtKB"/>
</dbReference>
<dbReference type="CDD" id="cd01713">
    <property type="entry name" value="CTU1-like"/>
    <property type="match status" value="1"/>
</dbReference>
<dbReference type="FunFam" id="3.40.50.620:FF:000054">
    <property type="entry name" value="Cytoplasmic tRNA 2-thiolation protein 1"/>
    <property type="match status" value="1"/>
</dbReference>
<dbReference type="Gene3D" id="3.40.50.620">
    <property type="entry name" value="HUPs"/>
    <property type="match status" value="1"/>
</dbReference>
<dbReference type="HAMAP" id="MF_03053">
    <property type="entry name" value="CTU1"/>
    <property type="match status" value="1"/>
</dbReference>
<dbReference type="InterPro" id="IPR056369">
    <property type="entry name" value="CTU1-like_ATP-bd"/>
</dbReference>
<dbReference type="InterPro" id="IPR032442">
    <property type="entry name" value="CTU1_C"/>
</dbReference>
<dbReference type="InterPro" id="IPR000541">
    <property type="entry name" value="Ncs6/Tuc1/Ctu1"/>
</dbReference>
<dbReference type="InterPro" id="IPR014729">
    <property type="entry name" value="Rossmann-like_a/b/a_fold"/>
</dbReference>
<dbReference type="InterPro" id="IPR011063">
    <property type="entry name" value="TilS/TtcA_N"/>
</dbReference>
<dbReference type="InterPro" id="IPR035107">
    <property type="entry name" value="tRNA_thiolation_TtcA_Ctu1"/>
</dbReference>
<dbReference type="NCBIfam" id="TIGR00269">
    <property type="entry name" value="TIGR00269 family protein"/>
    <property type="match status" value="1"/>
</dbReference>
<dbReference type="PANTHER" id="PTHR11807">
    <property type="entry name" value="ATPASES OF THE PP SUPERFAMILY-RELATED"/>
    <property type="match status" value="1"/>
</dbReference>
<dbReference type="PANTHER" id="PTHR11807:SF12">
    <property type="entry name" value="CYTOPLASMIC TRNA 2-THIOLATION PROTEIN 1"/>
    <property type="match status" value="1"/>
</dbReference>
<dbReference type="Pfam" id="PF01171">
    <property type="entry name" value="ATP_bind_3"/>
    <property type="match status" value="1"/>
</dbReference>
<dbReference type="Pfam" id="PF16503">
    <property type="entry name" value="zn-ribbon_14"/>
    <property type="match status" value="1"/>
</dbReference>
<dbReference type="PIRSF" id="PIRSF004976">
    <property type="entry name" value="ATPase_YdaO"/>
    <property type="match status" value="1"/>
</dbReference>
<dbReference type="SUPFAM" id="SSF52402">
    <property type="entry name" value="Adenine nucleotide alpha hydrolases-like"/>
    <property type="match status" value="1"/>
</dbReference>
<accession>P0CS70</accession>
<accession>Q55RW8</accession>
<accession>Q5KGC1</accession>
<comment type="function">
    <text evidence="1">Plays a central role in 2-thiolation of mcm(5)S(2)U at tRNA wobble positions of tRNA(Lys), tRNA(Glu) and tRNA(Gln). Directly binds tRNAs and probably acts by catalyzing adenylation of tRNAs, an intermediate required for 2-thiolation. It is unclear whether it acts as a sulfurtransferase that transfers sulfur from thiocarboxylated URM1 onto the uridine of tRNAs at wobble position. Prior mcm(5) tRNA modification by the elongator complex is required for 2-thiolation. May also be involved in protein urmylation.</text>
</comment>
<comment type="pathway">
    <text evidence="1">tRNA modification; 5-methoxycarbonylmethyl-2-thiouridine-tRNA biosynthesis.</text>
</comment>
<comment type="subcellular location">
    <subcellularLocation>
        <location evidence="1">Cytoplasm</location>
    </subcellularLocation>
</comment>
<comment type="similarity">
    <text evidence="1">Belongs to the TtcA family. CTU1/NCS6/ATPBD3 subfamily.</text>
</comment>
<sequence>MPPTPCSLCHTARALVKRPKTGQQVCKDCFFEVFETEVHNTIVEGEGIFKRGERVAIGASGGKDSTVLAHVLSVLNKRYDYGLDLYLLSIDEGITGYRDDSLETVKQNQAEYGLPLKILSYSELYGWTMDKIVEQVGKKNNCTFCGVFRRQALDRGAAQLGVDHIVTGHNADDIAETVLMNIMRGDIARLARCTAVTTQSEDTIKRSKPFKYAYEKEIVMYAYFKKLTYFSTECIYSPDAYRGHARVFLKDLEAVRPSAIVDIIHSGESFVLEQSVQRGMKALQTCLRCGYISSNDLCKACALLEGLESGLSRSALRQTQESTSAAPEGHRTIPMFERYASLNGTPRTPPTPAEPVEGIERAVRTIEIV</sequence>
<organism>
    <name type="scientific">Cryptococcus neoformans var. neoformans serotype D (strain JEC21 / ATCC MYA-565)</name>
    <name type="common">Filobasidiella neoformans</name>
    <dbReference type="NCBI Taxonomy" id="214684"/>
    <lineage>
        <taxon>Eukaryota</taxon>
        <taxon>Fungi</taxon>
        <taxon>Dikarya</taxon>
        <taxon>Basidiomycota</taxon>
        <taxon>Agaricomycotina</taxon>
        <taxon>Tremellomycetes</taxon>
        <taxon>Tremellales</taxon>
        <taxon>Cryptococcaceae</taxon>
        <taxon>Cryptococcus</taxon>
        <taxon>Cryptococcus neoformans species complex</taxon>
    </lineage>
</organism>
<keyword id="KW-0963">Cytoplasm</keyword>
<keyword id="KW-1185">Reference proteome</keyword>
<keyword id="KW-0694">RNA-binding</keyword>
<keyword id="KW-0808">Transferase</keyword>
<keyword id="KW-0819">tRNA processing</keyword>
<keyword id="KW-0820">tRNA-binding</keyword>
<gene>
    <name evidence="1" type="primary">NCS6</name>
    <name evidence="1" type="synonym">CTU1</name>
    <name type="ordered locus">CNE04150</name>
</gene>
<name>CTU1_CRYNJ</name>
<evidence type="ECO:0000255" key="1">
    <source>
        <dbReference type="HAMAP-Rule" id="MF_03053"/>
    </source>
</evidence>